<sequence>MSITAFDTKIPQEFSHSFLVDFSGLFQYLLRPLSEIDENVRWFGRRFEDYLLALQVNVHDRSGLYPQCIPYLFGMTICPFEEVLTFGII</sequence>
<gene>
    <name type="ordered locus">AF_1386</name>
</gene>
<protein>
    <recommendedName>
        <fullName>Uncharacterized protein AF_1386</fullName>
    </recommendedName>
</protein>
<keyword id="KW-1185">Reference proteome</keyword>
<name>Y1386_ARCFU</name>
<organism>
    <name type="scientific">Archaeoglobus fulgidus (strain ATCC 49558 / DSM 4304 / JCM 9628 / NBRC 100126 / VC-16)</name>
    <dbReference type="NCBI Taxonomy" id="224325"/>
    <lineage>
        <taxon>Archaea</taxon>
        <taxon>Methanobacteriati</taxon>
        <taxon>Methanobacteriota</taxon>
        <taxon>Archaeoglobi</taxon>
        <taxon>Archaeoglobales</taxon>
        <taxon>Archaeoglobaceae</taxon>
        <taxon>Archaeoglobus</taxon>
    </lineage>
</organism>
<proteinExistence type="predicted"/>
<reference key="1">
    <citation type="journal article" date="1997" name="Nature">
        <title>The complete genome sequence of the hyperthermophilic, sulphate-reducing archaeon Archaeoglobus fulgidus.</title>
        <authorList>
            <person name="Klenk H.-P."/>
            <person name="Clayton R.A."/>
            <person name="Tomb J.-F."/>
            <person name="White O."/>
            <person name="Nelson K.E."/>
            <person name="Ketchum K.A."/>
            <person name="Dodson R.J."/>
            <person name="Gwinn M.L."/>
            <person name="Hickey E.K."/>
            <person name="Peterson J.D."/>
            <person name="Richardson D.L."/>
            <person name="Kerlavage A.R."/>
            <person name="Graham D.E."/>
            <person name="Kyrpides N.C."/>
            <person name="Fleischmann R.D."/>
            <person name="Quackenbush J."/>
            <person name="Lee N.H."/>
            <person name="Sutton G.G."/>
            <person name="Gill S.R."/>
            <person name="Kirkness E.F."/>
            <person name="Dougherty B.A."/>
            <person name="McKenney K."/>
            <person name="Adams M.D."/>
            <person name="Loftus B.J."/>
            <person name="Peterson S.N."/>
            <person name="Reich C.I."/>
            <person name="McNeil L.K."/>
            <person name="Badger J.H."/>
            <person name="Glodek A."/>
            <person name="Zhou L."/>
            <person name="Overbeek R."/>
            <person name="Gocayne J.D."/>
            <person name="Weidman J.F."/>
            <person name="McDonald L.A."/>
            <person name="Utterback T.R."/>
            <person name="Cotton M.D."/>
            <person name="Spriggs T."/>
            <person name="Artiach P."/>
            <person name="Kaine B.P."/>
            <person name="Sykes S.M."/>
            <person name="Sadow P.W."/>
            <person name="D'Andrea K.P."/>
            <person name="Bowman C."/>
            <person name="Fujii C."/>
            <person name="Garland S.A."/>
            <person name="Mason T.M."/>
            <person name="Olsen G.J."/>
            <person name="Fraser C.M."/>
            <person name="Smith H.O."/>
            <person name="Woese C.R."/>
            <person name="Venter J.C."/>
        </authorList>
    </citation>
    <scope>NUCLEOTIDE SEQUENCE [LARGE SCALE GENOMIC DNA]</scope>
    <source>
        <strain>ATCC 49558 / DSM 4304 / JCM 9628 / NBRC 100126 / VC-16</strain>
    </source>
</reference>
<accession>O28885</accession>
<feature type="chain" id="PRO_0000127994" description="Uncharacterized protein AF_1386">
    <location>
        <begin position="1"/>
        <end position="89"/>
    </location>
</feature>
<dbReference type="EMBL" id="AE000782">
    <property type="protein sequence ID" value="AAB89880.1"/>
    <property type="molecule type" value="Genomic_DNA"/>
</dbReference>
<dbReference type="PIR" id="A69423">
    <property type="entry name" value="A69423"/>
</dbReference>
<dbReference type="PaxDb" id="224325-AF_1386"/>
<dbReference type="EnsemblBacteria" id="AAB89880">
    <property type="protein sequence ID" value="AAB89880"/>
    <property type="gene ID" value="AF_1386"/>
</dbReference>
<dbReference type="KEGG" id="afu:AF_1386"/>
<dbReference type="HOGENOM" id="CLU_2447487_0_0_2"/>
<dbReference type="Proteomes" id="UP000002199">
    <property type="component" value="Chromosome"/>
</dbReference>